<dbReference type="EC" id="3.1.-.-"/>
<dbReference type="EMBL" id="GL377311">
    <property type="protein sequence ID" value="EFI93263.1"/>
    <property type="molecule type" value="Genomic_DNA"/>
</dbReference>
<dbReference type="RefSeq" id="XP_003028166.1">
    <property type="nucleotide sequence ID" value="XM_003028120.1"/>
</dbReference>
<dbReference type="SMR" id="D8QGA7"/>
<dbReference type="FunCoup" id="D8QGA7">
    <property type="interactions" value="5"/>
</dbReference>
<dbReference type="STRING" id="578458.D8QGA7"/>
<dbReference type="GeneID" id="9591937"/>
<dbReference type="KEGG" id="scm:SCHCO_02639414"/>
<dbReference type="VEuPathDB" id="FungiDB:SCHCODRAFT_02639414"/>
<dbReference type="eggNOG" id="ENOG502S1U4">
    <property type="taxonomic scope" value="Eukaryota"/>
</dbReference>
<dbReference type="HOGENOM" id="CLU_046484_0_1_1"/>
<dbReference type="InParanoid" id="D8QGA7"/>
<dbReference type="OMA" id="IYHTPGG"/>
<dbReference type="OrthoDB" id="430293at2759"/>
<dbReference type="Proteomes" id="UP000007431">
    <property type="component" value="Unassembled WGS sequence"/>
</dbReference>
<dbReference type="GO" id="GO:0016020">
    <property type="term" value="C:membrane"/>
    <property type="evidence" value="ECO:0007669"/>
    <property type="project" value="UniProtKB-SubCell"/>
</dbReference>
<dbReference type="GO" id="GO:0005739">
    <property type="term" value="C:mitochondrion"/>
    <property type="evidence" value="ECO:0007669"/>
    <property type="project" value="UniProtKB-SubCell"/>
</dbReference>
<dbReference type="GO" id="GO:0004519">
    <property type="term" value="F:endonuclease activity"/>
    <property type="evidence" value="ECO:0007669"/>
    <property type="project" value="UniProtKB-KW"/>
</dbReference>
<dbReference type="GO" id="GO:0046872">
    <property type="term" value="F:metal ion binding"/>
    <property type="evidence" value="ECO:0007669"/>
    <property type="project" value="UniProtKB-KW"/>
</dbReference>
<dbReference type="Gene3D" id="2.40.50.90">
    <property type="match status" value="1"/>
</dbReference>
<dbReference type="InterPro" id="IPR035437">
    <property type="entry name" value="SNase_OB-fold_sf"/>
</dbReference>
<dbReference type="InterPro" id="IPR016071">
    <property type="entry name" value="Staphylococal_nuclease_OB-fold"/>
</dbReference>
<dbReference type="PANTHER" id="PTHR12302">
    <property type="entry name" value="EBNA2 BINDING PROTEIN P100"/>
    <property type="match status" value="1"/>
</dbReference>
<dbReference type="PANTHER" id="PTHR12302:SF3">
    <property type="entry name" value="SERINE_THREONINE-PROTEIN KINASE 31"/>
    <property type="match status" value="1"/>
</dbReference>
<dbReference type="Pfam" id="PF00565">
    <property type="entry name" value="SNase"/>
    <property type="match status" value="1"/>
</dbReference>
<dbReference type="SMART" id="SM00318">
    <property type="entry name" value="SNc"/>
    <property type="match status" value="1"/>
</dbReference>
<dbReference type="SUPFAM" id="SSF50199">
    <property type="entry name" value="Staphylococcal nuclease"/>
    <property type="match status" value="1"/>
</dbReference>
<dbReference type="PROSITE" id="PS50830">
    <property type="entry name" value="TNASE_3"/>
    <property type="match status" value="1"/>
</dbReference>
<evidence type="ECO:0000250" key="1"/>
<evidence type="ECO:0000255" key="2"/>
<evidence type="ECO:0000255" key="3">
    <source>
        <dbReference type="PROSITE-ProRule" id="PRU00272"/>
    </source>
</evidence>
<evidence type="ECO:0000256" key="4">
    <source>
        <dbReference type="SAM" id="MobiDB-lite"/>
    </source>
</evidence>
<evidence type="ECO:0000305" key="5"/>
<reference key="1">
    <citation type="journal article" date="2010" name="Nat. Biotechnol.">
        <title>Genome sequence of the model mushroom Schizophyllum commune.</title>
        <authorList>
            <person name="Ohm R.A."/>
            <person name="de Jong J.F."/>
            <person name="Lugones L.G."/>
            <person name="Aerts A."/>
            <person name="Kothe E."/>
            <person name="Stajich J.E."/>
            <person name="de Vries R.P."/>
            <person name="Record E."/>
            <person name="Levasseur A."/>
            <person name="Baker S.E."/>
            <person name="Bartholomew K.A."/>
            <person name="Coutinho P.M."/>
            <person name="Erdmann S."/>
            <person name="Fowler T.J."/>
            <person name="Gathman A.C."/>
            <person name="Lombard V."/>
            <person name="Henrissat B."/>
            <person name="Knabe N."/>
            <person name="Kuees U."/>
            <person name="Lilly W.W."/>
            <person name="Lindquist E."/>
            <person name="Lucas S."/>
            <person name="Magnuson J.K."/>
            <person name="Piumi F."/>
            <person name="Raudaskoski M."/>
            <person name="Salamov A."/>
            <person name="Schmutz J."/>
            <person name="Schwarze F.W.M.R."/>
            <person name="vanKuyk P.A."/>
            <person name="Horton J.S."/>
            <person name="Grigoriev I.V."/>
            <person name="Woesten H.A.B."/>
        </authorList>
    </citation>
    <scope>NUCLEOTIDE SEQUENCE [LARGE SCALE GENOMIC DNA]</scope>
    <source>
        <strain>H4-8 / FGSC 9210</strain>
    </source>
</reference>
<accession>D8QGA7</accession>
<protein>
    <recommendedName>
        <fullName>Probable endonuclease LCL3</fullName>
        <ecNumber>3.1.-.-</ecNumber>
    </recommendedName>
</protein>
<name>LCL3_SCHCM</name>
<feature type="chain" id="PRO_0000408681" description="Probable endonuclease LCL3">
    <location>
        <begin position="1"/>
        <end position="292"/>
    </location>
</feature>
<feature type="transmembrane region" description="Helical" evidence="2">
    <location>
        <begin position="41"/>
        <end position="58"/>
    </location>
</feature>
<feature type="domain" description="TNase-like" evidence="3">
    <location>
        <begin position="83"/>
        <end position="247"/>
    </location>
</feature>
<feature type="region of interest" description="Disordered" evidence="4">
    <location>
        <begin position="256"/>
        <end position="282"/>
    </location>
</feature>
<feature type="compositionally biased region" description="Basic and acidic residues" evidence="4">
    <location>
        <begin position="272"/>
        <end position="282"/>
    </location>
</feature>
<feature type="active site" evidence="3">
    <location>
        <position position="132"/>
    </location>
</feature>
<feature type="active site" evidence="3">
    <location>
        <position position="140"/>
    </location>
</feature>
<feature type="active site" evidence="3">
    <location>
        <position position="180"/>
    </location>
</feature>
<feature type="binding site" evidence="3">
    <location>
        <position position="137"/>
    </location>
    <ligand>
        <name>Ca(2+)</name>
        <dbReference type="ChEBI" id="CHEBI:29108"/>
    </ligand>
</feature>
<keyword id="KW-0106">Calcium</keyword>
<keyword id="KW-0255">Endonuclease</keyword>
<keyword id="KW-0378">Hydrolase</keyword>
<keyword id="KW-0472">Membrane</keyword>
<keyword id="KW-0479">Metal-binding</keyword>
<keyword id="KW-0496">Mitochondrion</keyword>
<keyword id="KW-0540">Nuclease</keyword>
<keyword id="KW-1185">Reference proteome</keyword>
<keyword id="KW-0812">Transmembrane</keyword>
<keyword id="KW-1133">Transmembrane helix</keyword>
<gene>
    <name type="primary">LCL3</name>
    <name type="ORF">SCHCODRAFT_70433</name>
</gene>
<organism>
    <name type="scientific">Schizophyllum commune (strain H4-8 / FGSC 9210)</name>
    <name type="common">Split gill fungus</name>
    <dbReference type="NCBI Taxonomy" id="578458"/>
    <lineage>
        <taxon>Eukaryota</taxon>
        <taxon>Fungi</taxon>
        <taxon>Dikarya</taxon>
        <taxon>Basidiomycota</taxon>
        <taxon>Agaricomycotina</taxon>
        <taxon>Agaricomycetes</taxon>
        <taxon>Agaricomycetidae</taxon>
        <taxon>Agaricales</taxon>
        <taxon>Schizophyllaceae</taxon>
        <taxon>Schizophyllum</taxon>
    </lineage>
</organism>
<proteinExistence type="inferred from homology"/>
<comment type="subcellular location">
    <subcellularLocation>
        <location>Mitochondrion</location>
    </subcellularLocation>
    <subcellularLocation>
        <location evidence="1">Membrane</location>
        <topology evidence="1">Single-pass membrane protein</topology>
    </subcellularLocation>
</comment>
<comment type="similarity">
    <text evidence="5">Belongs to the LCL3 family.</text>
</comment>
<sequence length="292" mass="33355">MPLIPWPASADDSSKGKDDEKDIATKAKELFALAGEIPPEYFSVAAFAAGSLSLAASYFVHKRYFRRIPNAEWVSPNHLARKRWIKGRVTSVGDNDNFRFYHTPGIGWRWPLKFRRVPTLTKELKDQTIHVRIAGVDAPENAHFGRPAQPYAQEALAYLRARILGKTVFCQLIRRDQYGRMVSHVRLAPRFLPATLFRGPNLAEDMLRKGWATTYEQHGAEYGEGGVERYKQIEQEAKDARRGIWAKGVRGETPAEYKRRYAQAADGGEPPSKARAEKEQKRGWLQRLFSWK</sequence>